<gene>
    <name type="ordered locus">SPH_0311</name>
</gene>
<comment type="similarity">
    <text evidence="1">Belongs to the UPF0473 family.</text>
</comment>
<evidence type="ECO:0000255" key="1">
    <source>
        <dbReference type="HAMAP-Rule" id="MF_01448"/>
    </source>
</evidence>
<accession>B1I8I6</accession>
<sequence>MSHDHNHDHEERELITLVDEQGNETLFEILLTIDGKEEFGKNYVLLVPVNAEEDEDGQVEIQAYSFIENEDGTEGELQPIPEDSEDEWNMIEEVFNSFMEE</sequence>
<proteinExistence type="inferred from homology"/>
<feature type="chain" id="PRO_1000200983" description="UPF0473 protein SPH_0311">
    <location>
        <begin position="1"/>
        <end position="101"/>
    </location>
</feature>
<organism>
    <name type="scientific">Streptococcus pneumoniae (strain Hungary19A-6)</name>
    <dbReference type="NCBI Taxonomy" id="487214"/>
    <lineage>
        <taxon>Bacteria</taxon>
        <taxon>Bacillati</taxon>
        <taxon>Bacillota</taxon>
        <taxon>Bacilli</taxon>
        <taxon>Lactobacillales</taxon>
        <taxon>Streptococcaceae</taxon>
        <taxon>Streptococcus</taxon>
    </lineage>
</organism>
<dbReference type="EMBL" id="CP000936">
    <property type="protein sequence ID" value="ACA36267.1"/>
    <property type="molecule type" value="Genomic_DNA"/>
</dbReference>
<dbReference type="RefSeq" id="WP_000017620.1">
    <property type="nucleotide sequence ID" value="NC_010380.1"/>
</dbReference>
<dbReference type="KEGG" id="spv:SPH_0311"/>
<dbReference type="HOGENOM" id="CLU_146610_2_1_9"/>
<dbReference type="Proteomes" id="UP000002163">
    <property type="component" value="Chromosome"/>
</dbReference>
<dbReference type="HAMAP" id="MF_01448">
    <property type="entry name" value="UPF0473"/>
    <property type="match status" value="1"/>
</dbReference>
<dbReference type="InterPro" id="IPR009711">
    <property type="entry name" value="UPF0473"/>
</dbReference>
<dbReference type="NCBIfam" id="NF010215">
    <property type="entry name" value="PRK13678.1-2"/>
    <property type="match status" value="1"/>
</dbReference>
<dbReference type="NCBIfam" id="NF010217">
    <property type="entry name" value="PRK13678.1-4"/>
    <property type="match status" value="1"/>
</dbReference>
<dbReference type="PANTHER" id="PTHR40066">
    <property type="entry name" value="UPF0473 PROTEIN CBO2561/CLC_2432"/>
    <property type="match status" value="1"/>
</dbReference>
<dbReference type="PANTHER" id="PTHR40066:SF1">
    <property type="entry name" value="UPF0473 PROTEIN CBO2561_CLC_2432"/>
    <property type="match status" value="1"/>
</dbReference>
<dbReference type="Pfam" id="PF06949">
    <property type="entry name" value="DUF1292"/>
    <property type="match status" value="1"/>
</dbReference>
<reference key="1">
    <citation type="journal article" date="2010" name="Genome Biol.">
        <title>Structure and dynamics of the pan-genome of Streptococcus pneumoniae and closely related species.</title>
        <authorList>
            <person name="Donati C."/>
            <person name="Hiller N.L."/>
            <person name="Tettelin H."/>
            <person name="Muzzi A."/>
            <person name="Croucher N.J."/>
            <person name="Angiuoli S.V."/>
            <person name="Oggioni M."/>
            <person name="Dunning Hotopp J.C."/>
            <person name="Hu F.Z."/>
            <person name="Riley D.R."/>
            <person name="Covacci A."/>
            <person name="Mitchell T.J."/>
            <person name="Bentley S.D."/>
            <person name="Kilian M."/>
            <person name="Ehrlich G.D."/>
            <person name="Rappuoli R."/>
            <person name="Moxon E.R."/>
            <person name="Masignani V."/>
        </authorList>
    </citation>
    <scope>NUCLEOTIDE SEQUENCE [LARGE SCALE GENOMIC DNA]</scope>
    <source>
        <strain>Hungary19A-6</strain>
    </source>
</reference>
<name>Y311_STRPI</name>
<protein>
    <recommendedName>
        <fullName evidence="1">UPF0473 protein SPH_0311</fullName>
    </recommendedName>
</protein>